<dbReference type="EC" id="2.3.2.29" evidence="1"/>
<dbReference type="EMBL" id="CP000577">
    <property type="protein sequence ID" value="ABN76406.1"/>
    <property type="molecule type" value="Genomic_DNA"/>
</dbReference>
<dbReference type="RefSeq" id="WP_011840927.1">
    <property type="nucleotide sequence ID" value="NC_009049.1"/>
</dbReference>
<dbReference type="SMR" id="A3PJ90"/>
<dbReference type="GeneID" id="67446389"/>
<dbReference type="KEGG" id="rsh:Rsph17029_1296"/>
<dbReference type="HOGENOM" id="CLU_077607_1_0_5"/>
<dbReference type="GO" id="GO:0005737">
    <property type="term" value="C:cytoplasm"/>
    <property type="evidence" value="ECO:0007669"/>
    <property type="project" value="UniProtKB-SubCell"/>
</dbReference>
<dbReference type="GO" id="GO:0004057">
    <property type="term" value="F:arginyl-tRNA--protein transferase activity"/>
    <property type="evidence" value="ECO:0007669"/>
    <property type="project" value="InterPro"/>
</dbReference>
<dbReference type="GO" id="GO:0008914">
    <property type="term" value="F:leucyl-tRNA--protein transferase activity"/>
    <property type="evidence" value="ECO:0007669"/>
    <property type="project" value="UniProtKB-UniRule"/>
</dbReference>
<dbReference type="GO" id="GO:0071596">
    <property type="term" value="P:ubiquitin-dependent protein catabolic process via the N-end rule pathway"/>
    <property type="evidence" value="ECO:0007669"/>
    <property type="project" value="InterPro"/>
</dbReference>
<dbReference type="HAMAP" id="MF_00689">
    <property type="entry name" value="Bpt"/>
    <property type="match status" value="1"/>
</dbReference>
<dbReference type="InterPro" id="IPR016181">
    <property type="entry name" value="Acyl_CoA_acyltransferase"/>
</dbReference>
<dbReference type="InterPro" id="IPR017138">
    <property type="entry name" value="Asp_Glu_LeuTrfase"/>
</dbReference>
<dbReference type="InterPro" id="IPR030700">
    <property type="entry name" value="N-end_Aminoacyl_Trfase"/>
</dbReference>
<dbReference type="InterPro" id="IPR007472">
    <property type="entry name" value="N-end_Aminoacyl_Trfase_C"/>
</dbReference>
<dbReference type="InterPro" id="IPR007471">
    <property type="entry name" value="N-end_Aminoacyl_Trfase_N"/>
</dbReference>
<dbReference type="NCBIfam" id="NF002341">
    <property type="entry name" value="PRK01305.1-1"/>
    <property type="match status" value="1"/>
</dbReference>
<dbReference type="NCBIfam" id="NF002342">
    <property type="entry name" value="PRK01305.1-3"/>
    <property type="match status" value="1"/>
</dbReference>
<dbReference type="NCBIfam" id="NF002343">
    <property type="entry name" value="PRK01305.1-4"/>
    <property type="match status" value="1"/>
</dbReference>
<dbReference type="NCBIfam" id="NF002346">
    <property type="entry name" value="PRK01305.2-3"/>
    <property type="match status" value="1"/>
</dbReference>
<dbReference type="PANTHER" id="PTHR21367">
    <property type="entry name" value="ARGININE-TRNA-PROTEIN TRANSFERASE 1"/>
    <property type="match status" value="1"/>
</dbReference>
<dbReference type="PANTHER" id="PTHR21367:SF1">
    <property type="entry name" value="ARGINYL-TRNA--PROTEIN TRANSFERASE 1"/>
    <property type="match status" value="1"/>
</dbReference>
<dbReference type="Pfam" id="PF04377">
    <property type="entry name" value="ATE_C"/>
    <property type="match status" value="1"/>
</dbReference>
<dbReference type="Pfam" id="PF04376">
    <property type="entry name" value="ATE_N"/>
    <property type="match status" value="1"/>
</dbReference>
<dbReference type="PIRSF" id="PIRSF037208">
    <property type="entry name" value="ATE_pro_prd"/>
    <property type="match status" value="1"/>
</dbReference>
<dbReference type="SUPFAM" id="SSF55729">
    <property type="entry name" value="Acyl-CoA N-acyltransferases (Nat)"/>
    <property type="match status" value="1"/>
</dbReference>
<keyword id="KW-0012">Acyltransferase</keyword>
<keyword id="KW-0963">Cytoplasm</keyword>
<keyword id="KW-0808">Transferase</keyword>
<sequence length="280" mass="31806">MRHTLPIAPQFYVTAPQSCPYLEGRLERKLFTALQGEHAQKLNDTLSKQGFRRSQNVLYRPSCAECSACLSARIRVADFEPTRTQRRVMKRNADLRRNATSPWATEDQYALFRRYLDDRHADGGMADMDIFEFAAMIEETPIRSRVIEYSRPGDTPSNRPLSAVCLTDIFDDGLSMVYSFYDPDLAGRSLGAYVILDHIEIAREAGLPYVYLGYWVPGSRKMGYKASYSALEIYKGGRWQDIGQPSDHRAELHPLSVDPIAEQVARISLPEARSGDRSRD</sequence>
<gene>
    <name evidence="1" type="primary">bpt</name>
    <name type="ordered locus">Rsph17029_1296</name>
</gene>
<reference key="1">
    <citation type="submission" date="2007-02" db="EMBL/GenBank/DDBJ databases">
        <title>Complete sequence of chromosome 1 of Rhodobacter sphaeroides ATCC 17029.</title>
        <authorList>
            <person name="Copeland A."/>
            <person name="Lucas S."/>
            <person name="Lapidus A."/>
            <person name="Barry K."/>
            <person name="Detter J.C."/>
            <person name="Glavina del Rio T."/>
            <person name="Hammon N."/>
            <person name="Israni S."/>
            <person name="Dalin E."/>
            <person name="Tice H."/>
            <person name="Pitluck S."/>
            <person name="Kiss H."/>
            <person name="Brettin T."/>
            <person name="Bruce D."/>
            <person name="Han C."/>
            <person name="Tapia R."/>
            <person name="Gilna P."/>
            <person name="Schmutz J."/>
            <person name="Larimer F."/>
            <person name="Land M."/>
            <person name="Hauser L."/>
            <person name="Kyrpides N."/>
            <person name="Mikhailova N."/>
            <person name="Richardson P."/>
            <person name="Mackenzie C."/>
            <person name="Choudhary M."/>
            <person name="Donohue T.J."/>
            <person name="Kaplan S."/>
        </authorList>
    </citation>
    <scope>NUCLEOTIDE SEQUENCE [LARGE SCALE GENOMIC DNA]</scope>
    <source>
        <strain>ATCC 17029 / ATH 2.4.9</strain>
    </source>
</reference>
<feature type="chain" id="PRO_1000045149" description="Aspartate/glutamate leucyltransferase">
    <location>
        <begin position="1"/>
        <end position="280"/>
    </location>
</feature>
<evidence type="ECO:0000255" key="1">
    <source>
        <dbReference type="HAMAP-Rule" id="MF_00689"/>
    </source>
</evidence>
<organism>
    <name type="scientific">Cereibacter sphaeroides (strain ATCC 17029 / ATH 2.4.9)</name>
    <name type="common">Rhodobacter sphaeroides</name>
    <dbReference type="NCBI Taxonomy" id="349101"/>
    <lineage>
        <taxon>Bacteria</taxon>
        <taxon>Pseudomonadati</taxon>
        <taxon>Pseudomonadota</taxon>
        <taxon>Alphaproteobacteria</taxon>
        <taxon>Rhodobacterales</taxon>
        <taxon>Paracoccaceae</taxon>
        <taxon>Cereibacter</taxon>
    </lineage>
</organism>
<proteinExistence type="inferred from homology"/>
<accession>A3PJ90</accession>
<protein>
    <recommendedName>
        <fullName evidence="1">Aspartate/glutamate leucyltransferase</fullName>
        <ecNumber evidence="1">2.3.2.29</ecNumber>
    </recommendedName>
</protein>
<comment type="function">
    <text evidence="1">Functions in the N-end rule pathway of protein degradation where it conjugates Leu from its aminoacyl-tRNA to the N-termini of proteins containing an N-terminal aspartate or glutamate.</text>
</comment>
<comment type="catalytic activity">
    <reaction evidence="1">
        <text>N-terminal L-glutamyl-[protein] + L-leucyl-tRNA(Leu) = N-terminal L-leucyl-L-glutamyl-[protein] + tRNA(Leu) + H(+)</text>
        <dbReference type="Rhea" id="RHEA:50412"/>
        <dbReference type="Rhea" id="RHEA-COMP:9613"/>
        <dbReference type="Rhea" id="RHEA-COMP:9622"/>
        <dbReference type="Rhea" id="RHEA-COMP:12664"/>
        <dbReference type="Rhea" id="RHEA-COMP:12668"/>
        <dbReference type="ChEBI" id="CHEBI:15378"/>
        <dbReference type="ChEBI" id="CHEBI:64721"/>
        <dbReference type="ChEBI" id="CHEBI:78442"/>
        <dbReference type="ChEBI" id="CHEBI:78494"/>
        <dbReference type="ChEBI" id="CHEBI:133041"/>
        <dbReference type="EC" id="2.3.2.29"/>
    </reaction>
</comment>
<comment type="catalytic activity">
    <reaction evidence="1">
        <text>N-terminal L-aspartyl-[protein] + L-leucyl-tRNA(Leu) = N-terminal L-leucyl-L-aspartyl-[protein] + tRNA(Leu) + H(+)</text>
        <dbReference type="Rhea" id="RHEA:50420"/>
        <dbReference type="Rhea" id="RHEA-COMP:9613"/>
        <dbReference type="Rhea" id="RHEA-COMP:9622"/>
        <dbReference type="Rhea" id="RHEA-COMP:12669"/>
        <dbReference type="Rhea" id="RHEA-COMP:12674"/>
        <dbReference type="ChEBI" id="CHEBI:15378"/>
        <dbReference type="ChEBI" id="CHEBI:64720"/>
        <dbReference type="ChEBI" id="CHEBI:78442"/>
        <dbReference type="ChEBI" id="CHEBI:78494"/>
        <dbReference type="ChEBI" id="CHEBI:133042"/>
        <dbReference type="EC" id="2.3.2.29"/>
    </reaction>
</comment>
<comment type="subcellular location">
    <subcellularLocation>
        <location evidence="1">Cytoplasm</location>
    </subcellularLocation>
</comment>
<comment type="similarity">
    <text evidence="1">Belongs to the R-transferase family. Bpt subfamily.</text>
</comment>
<name>BPT_CERS1</name>